<proteinExistence type="inferred from homology"/>
<organism>
    <name type="scientific">Escherichia coli (strain ATCC 8739 / DSM 1576 / NBRC 3972 / NCIMB 8545 / WDCM 00012 / Crooks)</name>
    <dbReference type="NCBI Taxonomy" id="481805"/>
    <lineage>
        <taxon>Bacteria</taxon>
        <taxon>Pseudomonadati</taxon>
        <taxon>Pseudomonadota</taxon>
        <taxon>Gammaproteobacteria</taxon>
        <taxon>Enterobacterales</taxon>
        <taxon>Enterobacteriaceae</taxon>
        <taxon>Escherichia</taxon>
    </lineage>
</organism>
<keyword id="KW-0067">ATP-binding</keyword>
<keyword id="KW-0460">Magnesium</keyword>
<keyword id="KW-0464">Manganese</keyword>
<keyword id="KW-0479">Metal-binding</keyword>
<keyword id="KW-0547">Nucleotide-binding</keyword>
<keyword id="KW-0548">Nucleotidyltransferase</keyword>
<keyword id="KW-0808">Transferase</keyword>
<protein>
    <recommendedName>
        <fullName evidence="1">Protein nucleotidyltransferase YdiU</fullName>
        <ecNumber evidence="1">2.7.7.-</ecNumber>
    </recommendedName>
    <alternativeName>
        <fullName evidence="1">Protein adenylyltransferase YdiU</fullName>
        <ecNumber evidence="1">2.7.7.108</ecNumber>
    </alternativeName>
    <alternativeName>
        <fullName evidence="1">Protein uridylyltransferase YdiU</fullName>
        <ecNumber evidence="1">2.7.7.-</ecNumber>
    </alternativeName>
</protein>
<reference key="1">
    <citation type="submission" date="2008-02" db="EMBL/GenBank/DDBJ databases">
        <title>Complete sequence of Escherichia coli C str. ATCC 8739.</title>
        <authorList>
            <person name="Copeland A."/>
            <person name="Lucas S."/>
            <person name="Lapidus A."/>
            <person name="Glavina del Rio T."/>
            <person name="Dalin E."/>
            <person name="Tice H."/>
            <person name="Bruce D."/>
            <person name="Goodwin L."/>
            <person name="Pitluck S."/>
            <person name="Kiss H."/>
            <person name="Brettin T."/>
            <person name="Detter J.C."/>
            <person name="Han C."/>
            <person name="Kuske C.R."/>
            <person name="Schmutz J."/>
            <person name="Larimer F."/>
            <person name="Land M."/>
            <person name="Hauser L."/>
            <person name="Kyrpides N."/>
            <person name="Mikhailova N."/>
            <person name="Ingram L."/>
            <person name="Richardson P."/>
        </authorList>
    </citation>
    <scope>NUCLEOTIDE SEQUENCE [LARGE SCALE GENOMIC DNA]</scope>
    <source>
        <strain>ATCC 8739 / DSM 1576 / NBRC 3972 / NCIMB 8545 / WDCM 00012 / Crooks</strain>
    </source>
</reference>
<name>SELO_ECOLC</name>
<accession>B1IQ50</accession>
<comment type="function">
    <text evidence="1">Nucleotidyltransferase involved in the post-translational modification of proteins. It can catalyze the addition of adenosine monophosphate (AMP) or uridine monophosphate (UMP) to a protein, resulting in modifications known as AMPylation and UMPylation.</text>
</comment>
<comment type="catalytic activity">
    <reaction evidence="1">
        <text>L-seryl-[protein] + ATP = 3-O-(5'-adenylyl)-L-seryl-[protein] + diphosphate</text>
        <dbReference type="Rhea" id="RHEA:58120"/>
        <dbReference type="Rhea" id="RHEA-COMP:9863"/>
        <dbReference type="Rhea" id="RHEA-COMP:15073"/>
        <dbReference type="ChEBI" id="CHEBI:29999"/>
        <dbReference type="ChEBI" id="CHEBI:30616"/>
        <dbReference type="ChEBI" id="CHEBI:33019"/>
        <dbReference type="ChEBI" id="CHEBI:142516"/>
        <dbReference type="EC" id="2.7.7.108"/>
    </reaction>
</comment>
<comment type="catalytic activity">
    <reaction evidence="1">
        <text>L-threonyl-[protein] + ATP = 3-O-(5'-adenylyl)-L-threonyl-[protein] + diphosphate</text>
        <dbReference type="Rhea" id="RHEA:54292"/>
        <dbReference type="Rhea" id="RHEA-COMP:11060"/>
        <dbReference type="Rhea" id="RHEA-COMP:13847"/>
        <dbReference type="ChEBI" id="CHEBI:30013"/>
        <dbReference type="ChEBI" id="CHEBI:30616"/>
        <dbReference type="ChEBI" id="CHEBI:33019"/>
        <dbReference type="ChEBI" id="CHEBI:138113"/>
        <dbReference type="EC" id="2.7.7.108"/>
    </reaction>
</comment>
<comment type="catalytic activity">
    <reaction evidence="1">
        <text>L-tyrosyl-[protein] + ATP = O-(5'-adenylyl)-L-tyrosyl-[protein] + diphosphate</text>
        <dbReference type="Rhea" id="RHEA:54288"/>
        <dbReference type="Rhea" id="RHEA-COMP:10136"/>
        <dbReference type="Rhea" id="RHEA-COMP:13846"/>
        <dbReference type="ChEBI" id="CHEBI:30616"/>
        <dbReference type="ChEBI" id="CHEBI:33019"/>
        <dbReference type="ChEBI" id="CHEBI:46858"/>
        <dbReference type="ChEBI" id="CHEBI:83624"/>
        <dbReference type="EC" id="2.7.7.108"/>
    </reaction>
</comment>
<comment type="catalytic activity">
    <reaction evidence="1">
        <text>L-histidyl-[protein] + UTP = N(tele)-(5'-uridylyl)-L-histidyl-[protein] + diphosphate</text>
        <dbReference type="Rhea" id="RHEA:83891"/>
        <dbReference type="Rhea" id="RHEA-COMP:9745"/>
        <dbReference type="Rhea" id="RHEA-COMP:20239"/>
        <dbReference type="ChEBI" id="CHEBI:29979"/>
        <dbReference type="ChEBI" id="CHEBI:33019"/>
        <dbReference type="ChEBI" id="CHEBI:46398"/>
        <dbReference type="ChEBI" id="CHEBI:233474"/>
    </reaction>
</comment>
<comment type="catalytic activity">
    <reaction evidence="1">
        <text>L-seryl-[protein] + UTP = O-(5'-uridylyl)-L-seryl-[protein] + diphosphate</text>
        <dbReference type="Rhea" id="RHEA:64604"/>
        <dbReference type="Rhea" id="RHEA-COMP:9863"/>
        <dbReference type="Rhea" id="RHEA-COMP:16635"/>
        <dbReference type="ChEBI" id="CHEBI:29999"/>
        <dbReference type="ChEBI" id="CHEBI:33019"/>
        <dbReference type="ChEBI" id="CHEBI:46398"/>
        <dbReference type="ChEBI" id="CHEBI:156051"/>
    </reaction>
</comment>
<comment type="catalytic activity">
    <reaction evidence="1">
        <text>L-tyrosyl-[protein] + UTP = O-(5'-uridylyl)-L-tyrosyl-[protein] + diphosphate</text>
        <dbReference type="Rhea" id="RHEA:83887"/>
        <dbReference type="Rhea" id="RHEA-COMP:10136"/>
        <dbReference type="Rhea" id="RHEA-COMP:20238"/>
        <dbReference type="ChEBI" id="CHEBI:33019"/>
        <dbReference type="ChEBI" id="CHEBI:46398"/>
        <dbReference type="ChEBI" id="CHEBI:46858"/>
        <dbReference type="ChEBI" id="CHEBI:90602"/>
    </reaction>
</comment>
<comment type="cofactor">
    <cofactor evidence="1">
        <name>Mg(2+)</name>
        <dbReference type="ChEBI" id="CHEBI:18420"/>
    </cofactor>
    <cofactor evidence="1">
        <name>Mn(2+)</name>
        <dbReference type="ChEBI" id="CHEBI:29035"/>
    </cofactor>
</comment>
<comment type="similarity">
    <text evidence="1">Belongs to the SELO family.</text>
</comment>
<dbReference type="EC" id="2.7.7.-" evidence="1"/>
<dbReference type="EC" id="2.7.7.108" evidence="1"/>
<dbReference type="EMBL" id="CP000946">
    <property type="protein sequence ID" value="ACA77571.1"/>
    <property type="molecule type" value="Genomic_DNA"/>
</dbReference>
<dbReference type="RefSeq" id="WP_000175708.1">
    <property type="nucleotide sequence ID" value="NZ_MTFT01000006.1"/>
</dbReference>
<dbReference type="SMR" id="B1IQ50"/>
<dbReference type="KEGG" id="ecl:EcolC_1925"/>
<dbReference type="HOGENOM" id="CLU_010245_4_0_6"/>
<dbReference type="GO" id="GO:0070733">
    <property type="term" value="F:AMPylase activity"/>
    <property type="evidence" value="ECO:0007669"/>
    <property type="project" value="RHEA"/>
</dbReference>
<dbReference type="GO" id="GO:0005524">
    <property type="term" value="F:ATP binding"/>
    <property type="evidence" value="ECO:0007669"/>
    <property type="project" value="UniProtKB-UniRule"/>
</dbReference>
<dbReference type="GO" id="GO:0000287">
    <property type="term" value="F:magnesium ion binding"/>
    <property type="evidence" value="ECO:0007669"/>
    <property type="project" value="UniProtKB-UniRule"/>
</dbReference>
<dbReference type="HAMAP" id="MF_00692">
    <property type="entry name" value="YdiU_SelO"/>
    <property type="match status" value="1"/>
</dbReference>
<dbReference type="InterPro" id="IPR054838">
    <property type="entry name" value="adnlytase_SelO"/>
</dbReference>
<dbReference type="InterPro" id="IPR003846">
    <property type="entry name" value="SelO"/>
</dbReference>
<dbReference type="NCBIfam" id="NF040880">
    <property type="entry name" value="adnlytase_SelO"/>
    <property type="match status" value="1"/>
</dbReference>
<dbReference type="NCBIfam" id="NF000658">
    <property type="entry name" value="PRK00029.1"/>
    <property type="match status" value="1"/>
</dbReference>
<dbReference type="PANTHER" id="PTHR32057">
    <property type="entry name" value="PROTEIN ADENYLYLTRANSFERASE SELO, MITOCHONDRIAL"/>
    <property type="match status" value="1"/>
</dbReference>
<dbReference type="PANTHER" id="PTHR32057:SF14">
    <property type="entry name" value="PROTEIN ADENYLYLTRANSFERASE SELO, MITOCHONDRIAL"/>
    <property type="match status" value="1"/>
</dbReference>
<dbReference type="Pfam" id="PF02696">
    <property type="entry name" value="SelO"/>
    <property type="match status" value="1"/>
</dbReference>
<gene>
    <name evidence="1" type="primary">ydiU</name>
    <name evidence="1" type="synonym">selO</name>
    <name type="ordered locus">EcolC_1925</name>
</gene>
<evidence type="ECO:0000255" key="1">
    <source>
        <dbReference type="HAMAP-Rule" id="MF_00692"/>
    </source>
</evidence>
<sequence length="478" mass="54469">MTLSFVTRWRDELPETYTALSPTPLNNARLIWHNTELANTLSIPSSLFKNGAGVWGGEALLPGMSPLAQVYSGHQFGVWAGQLGDGRGILLGEQLLADGTTMDWHLKGAGLTPYSRMGDGRAVLRSTIRESLASEAMHYLGIPTTRALSIVTSDSPVYRETAEPGAMLMRVAPSHLRFGHFEHFYYRRESEKVRQLADFAIRHYWSHLEDDEDKYRLWFSDVVARTASLIAQWQTVGFAHGVMNTDNMSLLGLTLDYGPFGFLDDYEPGFICNHSDHQGRYSFDNQPAVALWNLQRLAQTLSPFVAVDALNEALDSYQQVLLTHYGQRMRQKLGFMTEQKEDNALLNELFSLMARERSDYTRTFRMLSLTEQHSAASPLRDEFIDRAAFDDWFARYRGRLQQDEVSDSERQQLMQSVNPALVLRNWLAQRAIEAAEKGDMMELHRLHEALRNPFSDRDDDYVSRPPDWGKRLEVSCSS</sequence>
<feature type="chain" id="PRO_1000083130" description="Protein nucleotidyltransferase YdiU">
    <location>
        <begin position="1"/>
        <end position="478"/>
    </location>
</feature>
<feature type="active site" description="Proton acceptor" evidence="1">
    <location>
        <position position="246"/>
    </location>
</feature>
<feature type="binding site" evidence="1">
    <location>
        <position position="84"/>
    </location>
    <ligand>
        <name>ATP</name>
        <dbReference type="ChEBI" id="CHEBI:30616"/>
    </ligand>
</feature>
<feature type="binding site" evidence="1">
    <location>
        <position position="86"/>
    </location>
    <ligand>
        <name>ATP</name>
        <dbReference type="ChEBI" id="CHEBI:30616"/>
    </ligand>
</feature>
<feature type="binding site" evidence="1">
    <location>
        <position position="87"/>
    </location>
    <ligand>
        <name>ATP</name>
        <dbReference type="ChEBI" id="CHEBI:30616"/>
    </ligand>
</feature>
<feature type="binding site" evidence="1">
    <location>
        <position position="107"/>
    </location>
    <ligand>
        <name>ATP</name>
        <dbReference type="ChEBI" id="CHEBI:30616"/>
    </ligand>
</feature>
<feature type="binding site" evidence="1">
    <location>
        <position position="119"/>
    </location>
    <ligand>
        <name>ATP</name>
        <dbReference type="ChEBI" id="CHEBI:30616"/>
    </ligand>
</feature>
<feature type="binding site" evidence="1">
    <location>
        <position position="120"/>
    </location>
    <ligand>
        <name>ATP</name>
        <dbReference type="ChEBI" id="CHEBI:30616"/>
    </ligand>
</feature>
<feature type="binding site" evidence="1">
    <location>
        <position position="170"/>
    </location>
    <ligand>
        <name>ATP</name>
        <dbReference type="ChEBI" id="CHEBI:30616"/>
    </ligand>
</feature>
<feature type="binding site" evidence="1">
    <location>
        <position position="177"/>
    </location>
    <ligand>
        <name>ATP</name>
        <dbReference type="ChEBI" id="CHEBI:30616"/>
    </ligand>
</feature>
<feature type="binding site" evidence="1">
    <location>
        <position position="247"/>
    </location>
    <ligand>
        <name>Mg(2+)</name>
        <dbReference type="ChEBI" id="CHEBI:18420"/>
    </ligand>
</feature>
<feature type="binding site" evidence="1">
    <location>
        <position position="256"/>
    </location>
    <ligand>
        <name>ATP</name>
        <dbReference type="ChEBI" id="CHEBI:30616"/>
    </ligand>
</feature>
<feature type="binding site" evidence="1">
    <location>
        <position position="256"/>
    </location>
    <ligand>
        <name>Mg(2+)</name>
        <dbReference type="ChEBI" id="CHEBI:18420"/>
    </ligand>
</feature>